<reference key="1">
    <citation type="journal article" date="2000" name="Nature">
        <title>Sequence and analysis of chromosome 1 of the plant Arabidopsis thaliana.</title>
        <authorList>
            <person name="Theologis A."/>
            <person name="Ecker J.R."/>
            <person name="Palm C.J."/>
            <person name="Federspiel N.A."/>
            <person name="Kaul S."/>
            <person name="White O."/>
            <person name="Alonso J."/>
            <person name="Altafi H."/>
            <person name="Araujo R."/>
            <person name="Bowman C.L."/>
            <person name="Brooks S.Y."/>
            <person name="Buehler E."/>
            <person name="Chan A."/>
            <person name="Chao Q."/>
            <person name="Chen H."/>
            <person name="Cheuk R.F."/>
            <person name="Chin C.W."/>
            <person name="Chung M.K."/>
            <person name="Conn L."/>
            <person name="Conway A.B."/>
            <person name="Conway A.R."/>
            <person name="Creasy T.H."/>
            <person name="Dewar K."/>
            <person name="Dunn P."/>
            <person name="Etgu P."/>
            <person name="Feldblyum T.V."/>
            <person name="Feng J.-D."/>
            <person name="Fong B."/>
            <person name="Fujii C.Y."/>
            <person name="Gill J.E."/>
            <person name="Goldsmith A.D."/>
            <person name="Haas B."/>
            <person name="Hansen N.F."/>
            <person name="Hughes B."/>
            <person name="Huizar L."/>
            <person name="Hunter J.L."/>
            <person name="Jenkins J."/>
            <person name="Johnson-Hopson C."/>
            <person name="Khan S."/>
            <person name="Khaykin E."/>
            <person name="Kim C.J."/>
            <person name="Koo H.L."/>
            <person name="Kremenetskaia I."/>
            <person name="Kurtz D.B."/>
            <person name="Kwan A."/>
            <person name="Lam B."/>
            <person name="Langin-Hooper S."/>
            <person name="Lee A."/>
            <person name="Lee J.M."/>
            <person name="Lenz C.A."/>
            <person name="Li J.H."/>
            <person name="Li Y.-P."/>
            <person name="Lin X."/>
            <person name="Liu S.X."/>
            <person name="Liu Z.A."/>
            <person name="Luros J.S."/>
            <person name="Maiti R."/>
            <person name="Marziali A."/>
            <person name="Militscher J."/>
            <person name="Miranda M."/>
            <person name="Nguyen M."/>
            <person name="Nierman W.C."/>
            <person name="Osborne B.I."/>
            <person name="Pai G."/>
            <person name="Peterson J."/>
            <person name="Pham P.K."/>
            <person name="Rizzo M."/>
            <person name="Rooney T."/>
            <person name="Rowley D."/>
            <person name="Sakano H."/>
            <person name="Salzberg S.L."/>
            <person name="Schwartz J.R."/>
            <person name="Shinn P."/>
            <person name="Southwick A.M."/>
            <person name="Sun H."/>
            <person name="Tallon L.J."/>
            <person name="Tambunga G."/>
            <person name="Toriumi M.J."/>
            <person name="Town C.D."/>
            <person name="Utterback T."/>
            <person name="Van Aken S."/>
            <person name="Vaysberg M."/>
            <person name="Vysotskaia V.S."/>
            <person name="Walker M."/>
            <person name="Wu D."/>
            <person name="Yu G."/>
            <person name="Fraser C.M."/>
            <person name="Venter J.C."/>
            <person name="Davis R.W."/>
        </authorList>
    </citation>
    <scope>NUCLEOTIDE SEQUENCE [LARGE SCALE GENOMIC DNA]</scope>
    <source>
        <strain>cv. Columbia</strain>
    </source>
</reference>
<reference key="2">
    <citation type="journal article" date="2017" name="Plant J.">
        <title>Araport11: a complete reannotation of the Arabidopsis thaliana reference genome.</title>
        <authorList>
            <person name="Cheng C.Y."/>
            <person name="Krishnakumar V."/>
            <person name="Chan A.P."/>
            <person name="Thibaud-Nissen F."/>
            <person name="Schobel S."/>
            <person name="Town C.D."/>
        </authorList>
    </citation>
    <scope>GENOME REANNOTATION</scope>
    <source>
        <strain>cv. Columbia</strain>
    </source>
</reference>
<reference key="3">
    <citation type="journal article" date="2002" name="Science">
        <title>Functional annotation of a full-length Arabidopsis cDNA collection.</title>
        <authorList>
            <person name="Seki M."/>
            <person name="Narusaka M."/>
            <person name="Kamiya A."/>
            <person name="Ishida J."/>
            <person name="Satou M."/>
            <person name="Sakurai T."/>
            <person name="Nakajima M."/>
            <person name="Enju A."/>
            <person name="Akiyama K."/>
            <person name="Oono Y."/>
            <person name="Muramatsu M."/>
            <person name="Hayashizaki Y."/>
            <person name="Kawai J."/>
            <person name="Carninci P."/>
            <person name="Itoh M."/>
            <person name="Ishii Y."/>
            <person name="Arakawa T."/>
            <person name="Shibata K."/>
            <person name="Shinagawa A."/>
            <person name="Shinozaki K."/>
        </authorList>
    </citation>
    <scope>NUCLEOTIDE SEQUENCE [LARGE SCALE MRNA] (ISOFORM 1)</scope>
    <source>
        <strain>cv. Columbia</strain>
    </source>
</reference>
<reference key="4">
    <citation type="journal article" date="2003" name="Science">
        <title>Empirical analysis of transcriptional activity in the Arabidopsis genome.</title>
        <authorList>
            <person name="Yamada K."/>
            <person name="Lim J."/>
            <person name="Dale J.M."/>
            <person name="Chen H."/>
            <person name="Shinn P."/>
            <person name="Palm C.J."/>
            <person name="Southwick A.M."/>
            <person name="Wu H.C."/>
            <person name="Kim C.J."/>
            <person name="Nguyen M."/>
            <person name="Pham P.K."/>
            <person name="Cheuk R.F."/>
            <person name="Karlin-Newmann G."/>
            <person name="Liu S.X."/>
            <person name="Lam B."/>
            <person name="Sakano H."/>
            <person name="Wu T."/>
            <person name="Yu G."/>
            <person name="Miranda M."/>
            <person name="Quach H.L."/>
            <person name="Tripp M."/>
            <person name="Chang C.H."/>
            <person name="Lee J.M."/>
            <person name="Toriumi M.J."/>
            <person name="Chan M.M."/>
            <person name="Tang C.C."/>
            <person name="Onodera C.S."/>
            <person name="Deng J.M."/>
            <person name="Akiyama K."/>
            <person name="Ansari Y."/>
            <person name="Arakawa T."/>
            <person name="Banh J."/>
            <person name="Banno F."/>
            <person name="Bowser L."/>
            <person name="Brooks S.Y."/>
            <person name="Carninci P."/>
            <person name="Chao Q."/>
            <person name="Choy N."/>
            <person name="Enju A."/>
            <person name="Goldsmith A.D."/>
            <person name="Gurjal M."/>
            <person name="Hansen N.F."/>
            <person name="Hayashizaki Y."/>
            <person name="Johnson-Hopson C."/>
            <person name="Hsuan V.W."/>
            <person name="Iida K."/>
            <person name="Karnes M."/>
            <person name="Khan S."/>
            <person name="Koesema E."/>
            <person name="Ishida J."/>
            <person name="Jiang P.X."/>
            <person name="Jones T."/>
            <person name="Kawai J."/>
            <person name="Kamiya A."/>
            <person name="Meyers C."/>
            <person name="Nakajima M."/>
            <person name="Narusaka M."/>
            <person name="Seki M."/>
            <person name="Sakurai T."/>
            <person name="Satou M."/>
            <person name="Tamse R."/>
            <person name="Vaysberg M."/>
            <person name="Wallender E.K."/>
            <person name="Wong C."/>
            <person name="Yamamura Y."/>
            <person name="Yuan S."/>
            <person name="Shinozaki K."/>
            <person name="Davis R.W."/>
            <person name="Theologis A."/>
            <person name="Ecker J.R."/>
        </authorList>
    </citation>
    <scope>NUCLEOTIDE SEQUENCE [LARGE SCALE MRNA] (ISOFORM 1)</scope>
    <source>
        <strain>cv. Columbia</strain>
    </source>
</reference>
<reference key="5">
    <citation type="journal article" date="2009" name="DNA Res.">
        <title>Analysis of multiple occurrences of alternative splicing events in Arabidopsis thaliana using novel sequenced full-length cDNAs.</title>
        <authorList>
            <person name="Iida K."/>
            <person name="Fukami-Kobayashi K."/>
            <person name="Toyoda A."/>
            <person name="Sakaki Y."/>
            <person name="Kobayashi M."/>
            <person name="Seki M."/>
            <person name="Shinozaki K."/>
        </authorList>
    </citation>
    <scope>NUCLEOTIDE SEQUENCE [LARGE SCALE MRNA] (ISOFORMS 1 AND 3)</scope>
    <source>
        <strain>cv. Columbia</strain>
        <tissue>Root</tissue>
        <tissue>Rosette leaf</tissue>
    </source>
</reference>
<reference key="6">
    <citation type="submission" date="2002-03" db="EMBL/GenBank/DDBJ databases">
        <title>Full-length cDNA from Arabidopsis thaliana.</title>
        <authorList>
            <person name="Brover V.V."/>
            <person name="Troukhan M.E."/>
            <person name="Alexandrov N.A."/>
            <person name="Lu Y.-P."/>
            <person name="Flavell R.B."/>
            <person name="Feldmann K.A."/>
        </authorList>
    </citation>
    <scope>NUCLEOTIDE SEQUENCE [LARGE SCALE MRNA] (ISOFORM 1)</scope>
</reference>
<reference key="7">
    <citation type="journal article" date="2007" name="Proc. Natl. Acad. Sci. U.S.A.">
        <title>Phosphoproteomic identification of targets of the Arabidopsis sucrose nonfermenting-like kinase SnRK2.8 reveals a connection to metabolic processes.</title>
        <authorList>
            <person name="Shin R."/>
            <person name="Alvarez S."/>
            <person name="Burch A.Y."/>
            <person name="Jez J.M."/>
            <person name="Schachtman D.P."/>
        </authorList>
    </citation>
    <scope>PHOSPHORYLATION BY SNRK2.8</scope>
</reference>
<reference key="8">
    <citation type="journal article" date="2012" name="Mol. Cell. Proteomics">
        <title>Comparative large-scale characterisation of plant vs. mammal proteins reveals similar and idiosyncratic N-alpha acetylation features.</title>
        <authorList>
            <person name="Bienvenut W.V."/>
            <person name="Sumpton D."/>
            <person name="Martinez A."/>
            <person name="Lilla S."/>
            <person name="Espagne C."/>
            <person name="Meinnel T."/>
            <person name="Giglione C."/>
        </authorList>
    </citation>
    <scope>ACETYLATION [LARGE SCALE ANALYSIS] AT ALA-2</scope>
    <scope>CLEAVAGE OF INITIATOR METHIONINE [LARGE SCALE ANALYSIS]</scope>
    <scope>IDENTIFICATION BY MASS SPECTROMETRY [LARGE SCALE ANALYSIS]</scope>
</reference>
<feature type="initiator methionine" description="Removed" evidence="10">
    <location>
        <position position="1"/>
    </location>
</feature>
<feature type="chain" id="PRO_0000441174" description="Lactoylglutathione lyase GLX1">
    <location>
        <begin position="2"/>
        <end position="283"/>
    </location>
</feature>
<feature type="domain" description="VOC 1" evidence="4">
    <location>
        <begin position="17"/>
        <end position="141"/>
    </location>
</feature>
<feature type="domain" description="VOC 2" evidence="4">
    <location>
        <begin position="147"/>
        <end position="275"/>
    </location>
</feature>
<feature type="active site" description="Proton donor/acceptor" evidence="4">
    <location>
        <position position="137"/>
    </location>
</feature>
<feature type="binding site" description="in other chain" evidence="1">
    <location>
        <position position="20"/>
    </location>
    <ligand>
        <name>Zn(2+)</name>
        <dbReference type="ChEBI" id="CHEBI:29105"/>
        <note>ligand shared between dimeric partners</note>
    </ligand>
</feature>
<feature type="binding site" description="in other chain" evidence="1">
    <location>
        <position position="24"/>
    </location>
    <ligand>
        <name>substrate</name>
        <note>ligand shared between dimeric partners</note>
    </ligand>
</feature>
<feature type="binding site" description="in other chain" evidence="1">
    <location>
        <position position="71"/>
    </location>
    <ligand>
        <name>Zn(2+)</name>
        <dbReference type="ChEBI" id="CHEBI:29105"/>
        <note>ligand shared between dimeric partners</note>
    </ligand>
</feature>
<feature type="binding site" description="in other chain" evidence="1">
    <location>
        <position position="75"/>
    </location>
    <ligand>
        <name>substrate</name>
        <note>ligand shared between dimeric partners</note>
    </ligand>
</feature>
<feature type="binding site" description="in other chain" evidence="1">
    <location>
        <position position="89"/>
    </location>
    <ligand>
        <name>substrate</name>
        <note>ligand shared between dimeric partners</note>
    </ligand>
</feature>
<feature type="binding site" description="in other chain" evidence="1">
    <location>
        <position position="89"/>
    </location>
    <ligand>
        <name>Zn(2+)</name>
        <dbReference type="ChEBI" id="CHEBI:29105"/>
        <note>ligand shared between dimeric partners</note>
    </ligand>
</feature>
<feature type="binding site" description="in other chain" evidence="1">
    <location>
        <position position="137"/>
    </location>
    <ligand>
        <name>Zn(2+)</name>
        <dbReference type="ChEBI" id="CHEBI:29105"/>
        <note>ligand shared between dimeric partners</note>
    </ligand>
</feature>
<feature type="binding site" evidence="4">
    <location>
        <position position="150"/>
    </location>
    <ligand>
        <name>a divalent metal cation</name>
        <dbReference type="ChEBI" id="CHEBI:60240"/>
    </ligand>
</feature>
<feature type="binding site" evidence="3">
    <location>
        <position position="150"/>
    </location>
    <ligand>
        <name>substrate</name>
        <note>ligand shared between dimeric partners</note>
    </ligand>
</feature>
<feature type="binding site" evidence="3">
    <location>
        <position position="150"/>
    </location>
    <ligand>
        <name>Zn(2+)</name>
        <dbReference type="ChEBI" id="CHEBI:29105"/>
        <note>ligand shared between dimeric partners</note>
    </ligand>
</feature>
<feature type="binding site" evidence="3">
    <location>
        <position position="154"/>
    </location>
    <ligand>
        <name>substrate</name>
        <note>ligand shared between dimeric partners</note>
    </ligand>
</feature>
<feature type="binding site" evidence="4">
    <location>
        <position position="201"/>
    </location>
    <ligand>
        <name>a divalent metal cation</name>
        <dbReference type="ChEBI" id="CHEBI:60240"/>
    </ligand>
</feature>
<feature type="binding site" evidence="3">
    <location>
        <position position="201"/>
    </location>
    <ligand>
        <name>Zn(2+)</name>
        <dbReference type="ChEBI" id="CHEBI:29105"/>
        <note>ligand shared between dimeric partners</note>
    </ligand>
</feature>
<feature type="binding site" evidence="3">
    <location>
        <position position="205"/>
    </location>
    <ligand>
        <name>substrate</name>
        <note>ligand shared between dimeric partners</note>
    </ligand>
</feature>
<feature type="binding site" evidence="4">
    <location>
        <position position="219"/>
    </location>
    <ligand>
        <name>a divalent metal cation</name>
        <dbReference type="ChEBI" id="CHEBI:60240"/>
    </ligand>
</feature>
<feature type="binding site" description="in other chain" evidence="3">
    <location>
        <begin position="251"/>
        <end position="252"/>
    </location>
    <ligand>
        <name>substrate</name>
        <note>ligand shared between dimeric partners</note>
    </ligand>
</feature>
<feature type="binding site" evidence="4">
    <location>
        <position position="271"/>
    </location>
    <ligand>
        <name>a divalent metal cation</name>
        <dbReference type="ChEBI" id="CHEBI:60240"/>
    </ligand>
</feature>
<feature type="modified residue" description="N-acetylalanine" evidence="10">
    <location>
        <position position="2"/>
    </location>
</feature>
<feature type="splice variant" id="VSP_059032" description="In isoform 2.">
    <original>M</original>
    <variation>MNEIASASMLRLCQCFISICNVHFVSMRAAESSFLLSRNM</variation>
    <location>
        <position position="1"/>
    </location>
</feature>
<feature type="splice variant" id="VSP_059033" description="In isoform 3.">
    <original>IAIGTDDVYKSGE</original>
    <variation>AQMMCTKAVKLLR</variation>
    <location>
        <begin position="220"/>
        <end position="232"/>
    </location>
</feature>
<feature type="splice variant" id="VSP_059034" description="In isoform 3.">
    <location>
        <begin position="233"/>
        <end position="283"/>
    </location>
</feature>
<feature type="sequence conflict" description="In Ref. 5; BAH19947." evidence="7" ref="5">
    <original>G</original>
    <variation>C</variation>
    <location>
        <position position="40"/>
    </location>
</feature>
<feature type="sequence conflict" description="In Ref. 4; AAL07227." evidence="7" ref="4">
    <original>R</original>
    <variation>W</variation>
    <location>
        <position position="45"/>
    </location>
</feature>
<comment type="function">
    <text evidence="2">Catalyzes the conversion of hemimercaptal, formed from methylglyoxal and glutathione, to S-lactoylglutathione.</text>
</comment>
<comment type="catalytic activity">
    <reaction evidence="2">
        <text>(R)-S-lactoylglutathione = methylglyoxal + glutathione</text>
        <dbReference type="Rhea" id="RHEA:19069"/>
        <dbReference type="ChEBI" id="CHEBI:17158"/>
        <dbReference type="ChEBI" id="CHEBI:57474"/>
        <dbReference type="ChEBI" id="CHEBI:57925"/>
        <dbReference type="EC" id="4.4.1.5"/>
    </reaction>
</comment>
<comment type="cofactor">
    <cofactor evidence="3">
        <name>Zn(2+)</name>
        <dbReference type="ChEBI" id="CHEBI:29105"/>
    </cofactor>
    <text evidence="3">Binds 1 zinc ion per subunit. In the homodimer, two zinc ions are bound between subunits.</text>
</comment>
<comment type="pathway">
    <text evidence="2">Secondary metabolite metabolism; methylglyoxal degradation; (R)-lactate from methylglyoxal: step 1/2.</text>
</comment>
<comment type="subunit">
    <text evidence="2">Homodimer.</text>
</comment>
<comment type="alternative products">
    <event type="alternative splicing"/>
    <isoform>
        <id>O65398-1</id>
        <name>1</name>
        <sequence type="displayed"/>
    </isoform>
    <isoform>
        <id>O65398-2</id>
        <name>2</name>
        <sequence type="described" ref="VSP_059032"/>
    </isoform>
    <isoform>
        <id>O65398-3</id>
        <name>3</name>
        <sequence type="described" ref="VSP_059033 VSP_059034"/>
    </isoform>
</comment>
<comment type="PTM">
    <text evidence="5">Phosphorylated by SnRK2.8.</text>
</comment>
<comment type="similarity">
    <text evidence="7">Belongs to the glyoxalase I family.</text>
</comment>
<keyword id="KW-0007">Acetylation</keyword>
<keyword id="KW-0025">Alternative splicing</keyword>
<keyword id="KW-0223">Dioxygenase</keyword>
<keyword id="KW-0456">Lyase</keyword>
<keyword id="KW-0464">Manganese</keyword>
<keyword id="KW-0479">Metal-binding</keyword>
<keyword id="KW-0560">Oxidoreductase</keyword>
<keyword id="KW-0597">Phosphoprotein</keyword>
<keyword id="KW-1185">Reference proteome</keyword>
<keyword id="KW-0677">Repeat</keyword>
<keyword id="KW-0862">Zinc</keyword>
<proteinExistence type="evidence at protein level"/>
<gene>
    <name evidence="6" type="primary">GLX1</name>
    <name evidence="8" type="ordered locus">At1g11840</name>
    <name evidence="9" type="ORF">F12F1.32</name>
</gene>
<evidence type="ECO:0000250" key="1"/>
<evidence type="ECO:0000250" key="2">
    <source>
        <dbReference type="UniProtKB" id="Q04760"/>
    </source>
</evidence>
<evidence type="ECO:0000250" key="3">
    <source>
        <dbReference type="UniProtKB" id="Q9CPU0"/>
    </source>
</evidence>
<evidence type="ECO:0000255" key="4">
    <source>
        <dbReference type="PROSITE-ProRule" id="PRU01163"/>
    </source>
</evidence>
<evidence type="ECO:0000269" key="5">
    <source>
    </source>
</evidence>
<evidence type="ECO:0000303" key="6">
    <source>
    </source>
</evidence>
<evidence type="ECO:0000305" key="7"/>
<evidence type="ECO:0000312" key="8">
    <source>
        <dbReference type="Araport" id="AT1G11840"/>
    </source>
</evidence>
<evidence type="ECO:0000312" key="9">
    <source>
        <dbReference type="EMBL" id="AAC17630.1"/>
    </source>
</evidence>
<evidence type="ECO:0007744" key="10">
    <source>
    </source>
</evidence>
<dbReference type="EC" id="4.4.1.5" evidence="2"/>
<dbReference type="EMBL" id="AC002131">
    <property type="protein sequence ID" value="AAC17630.1"/>
    <property type="molecule type" value="Genomic_DNA"/>
</dbReference>
<dbReference type="EMBL" id="CP002684">
    <property type="protein sequence ID" value="AEE28792.1"/>
    <property type="molecule type" value="Genomic_DNA"/>
</dbReference>
<dbReference type="EMBL" id="CP002684">
    <property type="protein sequence ID" value="AEE28793.1"/>
    <property type="molecule type" value="Genomic_DNA"/>
</dbReference>
<dbReference type="EMBL" id="CP002684">
    <property type="protein sequence ID" value="AEE28794.1"/>
    <property type="molecule type" value="Genomic_DNA"/>
</dbReference>
<dbReference type="EMBL" id="CP002684">
    <property type="protein sequence ID" value="AEE28795.1"/>
    <property type="molecule type" value="Genomic_DNA"/>
</dbReference>
<dbReference type="EMBL" id="CP002684">
    <property type="protein sequence ID" value="AEE28796.1"/>
    <property type="molecule type" value="Genomic_DNA"/>
</dbReference>
<dbReference type="EMBL" id="CP002684">
    <property type="protein sequence ID" value="AEE28797.1"/>
    <property type="molecule type" value="Genomic_DNA"/>
</dbReference>
<dbReference type="EMBL" id="AB050553">
    <property type="protein sequence ID" value="BAB17665.1"/>
    <property type="molecule type" value="mRNA"/>
</dbReference>
<dbReference type="EMBL" id="AF428272">
    <property type="protein sequence ID" value="AAL16104.1"/>
    <property type="molecule type" value="mRNA"/>
</dbReference>
<dbReference type="EMBL" id="AY056148">
    <property type="protein sequence ID" value="AAL07227.1"/>
    <property type="molecule type" value="mRNA"/>
</dbReference>
<dbReference type="EMBL" id="AY074569">
    <property type="protein sequence ID" value="AAL67109.1"/>
    <property type="molecule type" value="mRNA"/>
</dbReference>
<dbReference type="EMBL" id="AY097360">
    <property type="protein sequence ID" value="AAM19876.1"/>
    <property type="molecule type" value="mRNA"/>
</dbReference>
<dbReference type="EMBL" id="AK316841">
    <property type="protein sequence ID" value="BAH19553.1"/>
    <property type="molecule type" value="mRNA"/>
</dbReference>
<dbReference type="EMBL" id="AK317270">
    <property type="protein sequence ID" value="BAH19947.1"/>
    <property type="molecule type" value="mRNA"/>
</dbReference>
<dbReference type="EMBL" id="AK318730">
    <property type="protein sequence ID" value="BAH56845.1"/>
    <property type="molecule type" value="mRNA"/>
</dbReference>
<dbReference type="EMBL" id="AY087874">
    <property type="protein sequence ID" value="AAM65426.1"/>
    <property type="molecule type" value="mRNA"/>
</dbReference>
<dbReference type="PIR" id="F86252">
    <property type="entry name" value="F86252"/>
</dbReference>
<dbReference type="RefSeq" id="NP_001031025.1">
    <molecule id="O65398-1"/>
    <property type="nucleotide sequence ID" value="NM_001035948.1"/>
</dbReference>
<dbReference type="RefSeq" id="NP_001031026.1">
    <molecule id="O65398-3"/>
    <property type="nucleotide sequence ID" value="NM_001035949.3"/>
</dbReference>
<dbReference type="RefSeq" id="NP_001184968.1">
    <molecule id="O65398-2"/>
    <property type="nucleotide sequence ID" value="NM_001198039.1"/>
</dbReference>
<dbReference type="RefSeq" id="NP_172648.1">
    <molecule id="O65398-1"/>
    <property type="nucleotide sequence ID" value="NM_101055.4"/>
</dbReference>
<dbReference type="RefSeq" id="NP_849643.1">
    <molecule id="O65398-1"/>
    <property type="nucleotide sequence ID" value="NM_179312.4"/>
</dbReference>
<dbReference type="RefSeq" id="NP_849644.2">
    <molecule id="O65398-1"/>
    <property type="nucleotide sequence ID" value="NM_179313.2"/>
</dbReference>
<dbReference type="SMR" id="O65398"/>
<dbReference type="FunCoup" id="O65398">
    <property type="interactions" value="2783"/>
</dbReference>
<dbReference type="IntAct" id="O65398">
    <property type="interactions" value="2"/>
</dbReference>
<dbReference type="STRING" id="3702.O65398"/>
<dbReference type="GlyGen" id="O65398">
    <property type="glycosylation" value="1 site"/>
</dbReference>
<dbReference type="iPTMnet" id="O65398"/>
<dbReference type="SwissPalm" id="O65398"/>
<dbReference type="PaxDb" id="3702-AT1G11840.6"/>
<dbReference type="ProMEX" id="O65398"/>
<dbReference type="ProteomicsDB" id="247404">
    <molecule id="O65398-1"/>
</dbReference>
<dbReference type="EnsemblPlants" id="AT1G11840.1">
    <molecule id="O65398-1"/>
    <property type="protein sequence ID" value="AT1G11840.1"/>
    <property type="gene ID" value="AT1G11840"/>
</dbReference>
<dbReference type="EnsemblPlants" id="AT1G11840.2">
    <molecule id="O65398-1"/>
    <property type="protein sequence ID" value="AT1G11840.2"/>
    <property type="gene ID" value="AT1G11840"/>
</dbReference>
<dbReference type="EnsemblPlants" id="AT1G11840.3">
    <molecule id="O65398-1"/>
    <property type="protein sequence ID" value="AT1G11840.3"/>
    <property type="gene ID" value="AT1G11840"/>
</dbReference>
<dbReference type="EnsemblPlants" id="AT1G11840.4">
    <molecule id="O65398-1"/>
    <property type="protein sequence ID" value="AT1G11840.4"/>
    <property type="gene ID" value="AT1G11840"/>
</dbReference>
<dbReference type="EnsemblPlants" id="AT1G11840.5">
    <molecule id="O65398-3"/>
    <property type="protein sequence ID" value="AT1G11840.5"/>
    <property type="gene ID" value="AT1G11840"/>
</dbReference>
<dbReference type="EnsemblPlants" id="AT1G11840.6">
    <molecule id="O65398-2"/>
    <property type="protein sequence ID" value="AT1G11840.6"/>
    <property type="gene ID" value="AT1G11840"/>
</dbReference>
<dbReference type="GeneID" id="837731"/>
<dbReference type="Gramene" id="AT1G11840.1">
    <molecule id="O65398-1"/>
    <property type="protein sequence ID" value="AT1G11840.1"/>
    <property type="gene ID" value="AT1G11840"/>
</dbReference>
<dbReference type="Gramene" id="AT1G11840.2">
    <molecule id="O65398-1"/>
    <property type="protein sequence ID" value="AT1G11840.2"/>
    <property type="gene ID" value="AT1G11840"/>
</dbReference>
<dbReference type="Gramene" id="AT1G11840.3">
    <molecule id="O65398-1"/>
    <property type="protein sequence ID" value="AT1G11840.3"/>
    <property type="gene ID" value="AT1G11840"/>
</dbReference>
<dbReference type="Gramene" id="AT1G11840.4">
    <molecule id="O65398-1"/>
    <property type="protein sequence ID" value="AT1G11840.4"/>
    <property type="gene ID" value="AT1G11840"/>
</dbReference>
<dbReference type="Gramene" id="AT1G11840.5">
    <molecule id="O65398-3"/>
    <property type="protein sequence ID" value="AT1G11840.5"/>
    <property type="gene ID" value="AT1G11840"/>
</dbReference>
<dbReference type="Gramene" id="AT1G11840.6">
    <molecule id="O65398-2"/>
    <property type="protein sequence ID" value="AT1G11840.6"/>
    <property type="gene ID" value="AT1G11840"/>
</dbReference>
<dbReference type="KEGG" id="ath:AT1G11840"/>
<dbReference type="Araport" id="AT1G11840"/>
<dbReference type="TAIR" id="AT1G11840">
    <property type="gene designation" value="GLX1"/>
</dbReference>
<dbReference type="eggNOG" id="KOG2943">
    <property type="taxonomic scope" value="Eukaryota"/>
</dbReference>
<dbReference type="HOGENOM" id="CLU_030607_2_0_1"/>
<dbReference type="InParanoid" id="O65398"/>
<dbReference type="OMA" id="MGDAWGH"/>
<dbReference type="PhylomeDB" id="O65398"/>
<dbReference type="BioCyc" id="ARA:AT1G11840-MONOMER"/>
<dbReference type="UniPathway" id="UPA00619">
    <property type="reaction ID" value="UER00675"/>
</dbReference>
<dbReference type="CD-CODE" id="4299E36E">
    <property type="entry name" value="Nucleolus"/>
</dbReference>
<dbReference type="PRO" id="PR:O65398"/>
<dbReference type="Proteomes" id="UP000006548">
    <property type="component" value="Chromosome 1"/>
</dbReference>
<dbReference type="ExpressionAtlas" id="O65398">
    <property type="expression patterns" value="baseline and differential"/>
</dbReference>
<dbReference type="GO" id="GO:0009941">
    <property type="term" value="C:chloroplast envelope"/>
    <property type="evidence" value="ECO:0007005"/>
    <property type="project" value="TAIR"/>
</dbReference>
<dbReference type="GO" id="GO:0005829">
    <property type="term" value="C:cytosol"/>
    <property type="evidence" value="ECO:0007005"/>
    <property type="project" value="TAIR"/>
</dbReference>
<dbReference type="GO" id="GO:0005576">
    <property type="term" value="C:extracellular region"/>
    <property type="evidence" value="ECO:0007005"/>
    <property type="project" value="TAIR"/>
</dbReference>
<dbReference type="GO" id="GO:0005777">
    <property type="term" value="C:peroxisome"/>
    <property type="evidence" value="ECO:0000314"/>
    <property type="project" value="TAIR"/>
</dbReference>
<dbReference type="GO" id="GO:0000325">
    <property type="term" value="C:plant-type vacuole"/>
    <property type="evidence" value="ECO:0007005"/>
    <property type="project" value="TAIR"/>
</dbReference>
<dbReference type="GO" id="GO:0099503">
    <property type="term" value="C:secretory vesicle"/>
    <property type="evidence" value="ECO:0007005"/>
    <property type="project" value="TAIR"/>
</dbReference>
<dbReference type="GO" id="GO:0051213">
    <property type="term" value="F:dioxygenase activity"/>
    <property type="evidence" value="ECO:0007669"/>
    <property type="project" value="UniProtKB-KW"/>
</dbReference>
<dbReference type="GO" id="GO:0004462">
    <property type="term" value="F:lactoylglutathione lyase activity"/>
    <property type="evidence" value="ECO:0000314"/>
    <property type="project" value="TAIR"/>
</dbReference>
<dbReference type="GO" id="GO:0046872">
    <property type="term" value="F:metal ion binding"/>
    <property type="evidence" value="ECO:0007669"/>
    <property type="project" value="UniProtKB-KW"/>
</dbReference>
<dbReference type="GO" id="GO:0019243">
    <property type="term" value="P:methylglyoxal catabolic process to D-lactate via S-lactoyl-glutathione"/>
    <property type="evidence" value="ECO:0000316"/>
    <property type="project" value="TAIR"/>
</dbReference>
<dbReference type="CDD" id="cd16358">
    <property type="entry name" value="GlxI_Ni"/>
    <property type="match status" value="1"/>
</dbReference>
<dbReference type="FunFam" id="3.10.180.10:FF:000004">
    <property type="entry name" value="Lactoylglutathione lyase"/>
    <property type="match status" value="1"/>
</dbReference>
<dbReference type="Gene3D" id="3.10.180.10">
    <property type="entry name" value="2,3-Dihydroxybiphenyl 1,2-Dioxygenase, domain 1"/>
    <property type="match status" value="2"/>
</dbReference>
<dbReference type="InterPro" id="IPR029068">
    <property type="entry name" value="Glyas_Bleomycin-R_OHBP_Dase"/>
</dbReference>
<dbReference type="InterPro" id="IPR004360">
    <property type="entry name" value="Glyas_Fos-R_dOase_dom"/>
</dbReference>
<dbReference type="InterPro" id="IPR004361">
    <property type="entry name" value="Glyoxalase_1"/>
</dbReference>
<dbReference type="InterPro" id="IPR018146">
    <property type="entry name" value="Glyoxalase_1_CS"/>
</dbReference>
<dbReference type="InterPro" id="IPR037523">
    <property type="entry name" value="VOC"/>
</dbReference>
<dbReference type="NCBIfam" id="TIGR00068">
    <property type="entry name" value="glyox_I"/>
    <property type="match status" value="1"/>
</dbReference>
<dbReference type="PANTHER" id="PTHR46036">
    <property type="entry name" value="LACTOYLGLUTATHIONE LYASE"/>
    <property type="match status" value="1"/>
</dbReference>
<dbReference type="PANTHER" id="PTHR46036:SF2">
    <property type="entry name" value="LACTOYLGLUTATHIONE LYASE GLX1"/>
    <property type="match status" value="1"/>
</dbReference>
<dbReference type="Pfam" id="PF00903">
    <property type="entry name" value="Glyoxalase"/>
    <property type="match status" value="2"/>
</dbReference>
<dbReference type="SUPFAM" id="SSF54593">
    <property type="entry name" value="Glyoxalase/Bleomycin resistance protein/Dihydroxybiphenyl dioxygenase"/>
    <property type="match status" value="2"/>
</dbReference>
<dbReference type="PROSITE" id="PS00934">
    <property type="entry name" value="GLYOXALASE_I_1"/>
    <property type="match status" value="2"/>
</dbReference>
<dbReference type="PROSITE" id="PS00935">
    <property type="entry name" value="GLYOXALASE_I_2"/>
    <property type="match status" value="1"/>
</dbReference>
<dbReference type="PROSITE" id="PS51819">
    <property type="entry name" value="VOC"/>
    <property type="match status" value="2"/>
</dbReference>
<accession>O65398</accession>
<accession>B9DFN6</accession>
<accession>B9DGT0</accession>
<accession>F4IAH9</accession>
<accession>Q3EDE2</accession>
<accession>Q940A4</accession>
<sequence length="283" mass="31928">MAEASDLLEWPKKDNRRFLHVVYRVGDLDRTIEFYTEVFGMKLLRKRDIPEEKYSNAFLGFGPETSNFVVELTYNYGVSSYDIGTGFGHFAISTQDVSKLVENVRAKGGNVTREPGPVKGGGSVIAFVKDPDGYTFELIQRGPTPEPFCQVMLRVGDLDRAIKFYEKALGMRLLRKIERPEYKYTIGMMGYAEEYESIVLELTYNYDVTEYTKGNAYAQIAIGTDDVYKSGEVIKIVNQELGGKITREAGPLPGLGTKIVSFLDPDGWKTVLVDNKDFLKELE</sequence>
<name>GLX1_ARATH</name>
<protein>
    <recommendedName>
        <fullName evidence="6">Lactoylglutathione lyase GLX1</fullName>
        <ecNumber evidence="2">4.4.1.5</ecNumber>
    </recommendedName>
    <alternativeName>
        <fullName evidence="6">Glyoxalase I</fullName>
        <shortName evidence="6">AtGLX1</shortName>
        <shortName evidence="6">GlyI</shortName>
    </alternativeName>
</protein>
<organism>
    <name type="scientific">Arabidopsis thaliana</name>
    <name type="common">Mouse-ear cress</name>
    <dbReference type="NCBI Taxonomy" id="3702"/>
    <lineage>
        <taxon>Eukaryota</taxon>
        <taxon>Viridiplantae</taxon>
        <taxon>Streptophyta</taxon>
        <taxon>Embryophyta</taxon>
        <taxon>Tracheophyta</taxon>
        <taxon>Spermatophyta</taxon>
        <taxon>Magnoliopsida</taxon>
        <taxon>eudicotyledons</taxon>
        <taxon>Gunneridae</taxon>
        <taxon>Pentapetalae</taxon>
        <taxon>rosids</taxon>
        <taxon>malvids</taxon>
        <taxon>Brassicales</taxon>
        <taxon>Brassicaceae</taxon>
        <taxon>Camelineae</taxon>
        <taxon>Arabidopsis</taxon>
    </lineage>
</organism>